<keyword id="KW-0002">3D-structure</keyword>
<keyword id="KW-0963">Cytoplasm</keyword>
<keyword id="KW-0251">Elongation factor</keyword>
<keyword id="KW-0379">Hydroxylation</keyword>
<keyword id="KW-0648">Protein biosynthesis</keyword>
<keyword id="KW-1185">Reference proteome</keyword>
<feature type="chain" id="PRO_0000094241" description="Elongation factor P">
    <location>
        <begin position="1"/>
        <end position="188"/>
    </location>
</feature>
<feature type="modified residue" description="N6-(3,6-diaminohexanoyl)-5-hydroxylysine" evidence="1">
    <location>
        <position position="34"/>
    </location>
</feature>
<feature type="helix" evidence="2">
    <location>
        <begin position="6"/>
        <end position="8"/>
    </location>
</feature>
<feature type="strand" evidence="2">
    <location>
        <begin position="14"/>
        <end position="17"/>
    </location>
</feature>
<feature type="strand" evidence="2">
    <location>
        <begin position="20"/>
        <end position="30"/>
    </location>
</feature>
<feature type="strand" evidence="2">
    <location>
        <begin position="33"/>
        <end position="35"/>
    </location>
</feature>
<feature type="strand" evidence="2">
    <location>
        <begin position="38"/>
        <end position="45"/>
    </location>
</feature>
<feature type="turn" evidence="2">
    <location>
        <begin position="46"/>
        <end position="48"/>
    </location>
</feature>
<feature type="strand" evidence="2">
    <location>
        <begin position="51"/>
        <end position="57"/>
    </location>
</feature>
<feature type="strand" evidence="2">
    <location>
        <begin position="67"/>
        <end position="77"/>
    </location>
</feature>
<feature type="strand" evidence="2">
    <location>
        <begin position="82"/>
        <end position="89"/>
    </location>
</feature>
<feature type="strand" evidence="2">
    <location>
        <begin position="92"/>
        <end position="95"/>
    </location>
</feature>
<feature type="helix" evidence="2">
    <location>
        <begin position="97"/>
        <end position="100"/>
    </location>
</feature>
<feature type="helix" evidence="2">
    <location>
        <begin position="101"/>
        <end position="106"/>
    </location>
</feature>
<feature type="strand" evidence="2">
    <location>
        <begin position="112"/>
        <end position="118"/>
    </location>
</feature>
<feature type="strand" evidence="2">
    <location>
        <begin position="121"/>
        <end position="126"/>
    </location>
</feature>
<reference key="1">
    <citation type="journal article" date="2003" name="Proc. Natl. Acad. Sci. U.S.A.">
        <title>Complete genome sequence of the Q-fever pathogen, Coxiella burnetii.</title>
        <authorList>
            <person name="Seshadri R."/>
            <person name="Paulsen I.T."/>
            <person name="Eisen J.A."/>
            <person name="Read T.D."/>
            <person name="Nelson K.E."/>
            <person name="Nelson W.C."/>
            <person name="Ward N.L."/>
            <person name="Tettelin H."/>
            <person name="Davidsen T.M."/>
            <person name="Beanan M.J."/>
            <person name="DeBoy R.T."/>
            <person name="Daugherty S.C."/>
            <person name="Brinkac L.M."/>
            <person name="Madupu R."/>
            <person name="Dodson R.J."/>
            <person name="Khouri H.M."/>
            <person name="Lee K.H."/>
            <person name="Carty H.A."/>
            <person name="Scanlan D."/>
            <person name="Heinzen R.A."/>
            <person name="Thompson H.A."/>
            <person name="Samuel J.E."/>
            <person name="Fraser C.M."/>
            <person name="Heidelberg J.F."/>
        </authorList>
    </citation>
    <scope>NUCLEOTIDE SEQUENCE [LARGE SCALE GENOMIC DNA]</scope>
    <source>
        <strain>RSA 493 / Nine Mile phase I</strain>
    </source>
</reference>
<evidence type="ECO:0000255" key="1">
    <source>
        <dbReference type="HAMAP-Rule" id="MF_00141"/>
    </source>
</evidence>
<evidence type="ECO:0007829" key="2">
    <source>
        <dbReference type="PDB" id="3TRE"/>
    </source>
</evidence>
<sequence>MATHSTNEFRGGLKVMVDGDPCSIIDNEFVKPGKGQAFNRVKFRNLKTGRVLERTFKSGETLPAADVVEVEMQYLYNDGEFWHFMTSENYEQHAASKEAVAEAKQWLKEEALCMVTMWNGVPLSVEPPNFVELKITETEPGVRGDTATGGTKRAKLETGAVVRVPLFLNEGEIIKVDTRRGEYVSRAK</sequence>
<name>EFP_COXBU</name>
<protein>
    <recommendedName>
        <fullName evidence="1">Elongation factor P</fullName>
        <shortName evidence="1">EF-P</shortName>
    </recommendedName>
</protein>
<accession>Q83AR4</accession>
<proteinExistence type="evidence at protein level"/>
<organism>
    <name type="scientific">Coxiella burnetii (strain RSA 493 / Nine Mile phase I)</name>
    <dbReference type="NCBI Taxonomy" id="227377"/>
    <lineage>
        <taxon>Bacteria</taxon>
        <taxon>Pseudomonadati</taxon>
        <taxon>Pseudomonadota</taxon>
        <taxon>Gammaproteobacteria</taxon>
        <taxon>Legionellales</taxon>
        <taxon>Coxiellaceae</taxon>
        <taxon>Coxiella</taxon>
    </lineage>
</organism>
<comment type="function">
    <text evidence="1">Involved in peptide bond synthesis. Alleviates ribosome stalling that occurs when 3 or more consecutive Pro residues or the sequence PPG is present in a protein, possibly by augmenting the peptidyl transferase activity of the ribosome. Modification of Lys-34 is required for alleviation.</text>
</comment>
<comment type="pathway">
    <text evidence="1">Protein biosynthesis; polypeptide chain elongation.</text>
</comment>
<comment type="subcellular location">
    <subcellularLocation>
        <location evidence="1">Cytoplasm</location>
    </subcellularLocation>
</comment>
<comment type="PTM">
    <text evidence="1">May be beta-lysylated on the epsilon-amino group of Lys-34 by the combined action of EpmA and EpmB, and then hydroxylated on the C5 position of the same residue by EpmC (if this protein is present). Lysylation is critical for the stimulatory effect of EF-P on peptide-bond formation. The lysylation moiety may extend toward the peptidyltransferase center and stabilize the terminal 3-CCA end of the tRNA. Hydroxylation of the C5 position on Lys-34 may allow additional potential stabilizing hydrogen-bond interactions with the P-tRNA.</text>
</comment>
<comment type="similarity">
    <text evidence="1">Belongs to the elongation factor P family.</text>
</comment>
<gene>
    <name evidence="1" type="primary">efp</name>
    <name type="ordered locus">CBU_1816</name>
</gene>
<dbReference type="EMBL" id="AE016828">
    <property type="protein sequence ID" value="AAO91309.1"/>
    <property type="molecule type" value="Genomic_DNA"/>
</dbReference>
<dbReference type="RefSeq" id="NP_820795.1">
    <property type="nucleotide sequence ID" value="NC_002971.4"/>
</dbReference>
<dbReference type="RefSeq" id="WP_005772139.1">
    <property type="nucleotide sequence ID" value="NZ_CDBG01000001.1"/>
</dbReference>
<dbReference type="PDB" id="3TRE">
    <property type="method" value="X-ray"/>
    <property type="resolution" value="2.90 A"/>
    <property type="chains" value="A=1-188"/>
</dbReference>
<dbReference type="PDBsum" id="3TRE"/>
<dbReference type="SMR" id="Q83AR4"/>
<dbReference type="STRING" id="227377.CBU_1816"/>
<dbReference type="DNASU" id="1209727"/>
<dbReference type="EnsemblBacteria" id="AAO91309">
    <property type="protein sequence ID" value="AAO91309"/>
    <property type="gene ID" value="CBU_1816"/>
</dbReference>
<dbReference type="GeneID" id="1209727"/>
<dbReference type="KEGG" id="cbu:CBU_1816"/>
<dbReference type="PATRIC" id="fig|227377.7.peg.1802"/>
<dbReference type="eggNOG" id="COG0231">
    <property type="taxonomic scope" value="Bacteria"/>
</dbReference>
<dbReference type="HOGENOM" id="CLU_074944_0_0_6"/>
<dbReference type="OrthoDB" id="9801844at2"/>
<dbReference type="UniPathway" id="UPA00345"/>
<dbReference type="EvolutionaryTrace" id="Q83AR4"/>
<dbReference type="Proteomes" id="UP000002671">
    <property type="component" value="Chromosome"/>
</dbReference>
<dbReference type="GO" id="GO:0005737">
    <property type="term" value="C:cytoplasm"/>
    <property type="evidence" value="ECO:0000318"/>
    <property type="project" value="GO_Central"/>
</dbReference>
<dbReference type="GO" id="GO:0003746">
    <property type="term" value="F:translation elongation factor activity"/>
    <property type="evidence" value="ECO:0000318"/>
    <property type="project" value="GO_Central"/>
</dbReference>
<dbReference type="GO" id="GO:0043043">
    <property type="term" value="P:peptide biosynthetic process"/>
    <property type="evidence" value="ECO:0007669"/>
    <property type="project" value="InterPro"/>
</dbReference>
<dbReference type="CDD" id="cd04470">
    <property type="entry name" value="S1_EF-P_repeat_1"/>
    <property type="match status" value="1"/>
</dbReference>
<dbReference type="CDD" id="cd05794">
    <property type="entry name" value="S1_EF-P_repeat_2"/>
    <property type="match status" value="1"/>
</dbReference>
<dbReference type="DisProt" id="DP01015"/>
<dbReference type="FunFam" id="2.30.30.30:FF:000003">
    <property type="entry name" value="Elongation factor P"/>
    <property type="match status" value="1"/>
</dbReference>
<dbReference type="FunFam" id="2.40.50.140:FF:000004">
    <property type="entry name" value="Elongation factor P"/>
    <property type="match status" value="1"/>
</dbReference>
<dbReference type="FunFam" id="2.40.50.140:FF:000009">
    <property type="entry name" value="Elongation factor P"/>
    <property type="match status" value="1"/>
</dbReference>
<dbReference type="Gene3D" id="2.30.30.30">
    <property type="match status" value="1"/>
</dbReference>
<dbReference type="Gene3D" id="2.40.50.140">
    <property type="entry name" value="Nucleic acid-binding proteins"/>
    <property type="match status" value="2"/>
</dbReference>
<dbReference type="HAMAP" id="MF_00141">
    <property type="entry name" value="EF_P"/>
    <property type="match status" value="1"/>
</dbReference>
<dbReference type="InterPro" id="IPR015365">
    <property type="entry name" value="Elong-fact-P_C"/>
</dbReference>
<dbReference type="InterPro" id="IPR012340">
    <property type="entry name" value="NA-bd_OB-fold"/>
</dbReference>
<dbReference type="InterPro" id="IPR014722">
    <property type="entry name" value="Rib_uL2_dom2"/>
</dbReference>
<dbReference type="InterPro" id="IPR020599">
    <property type="entry name" value="Transl_elong_fac_P/YeiP"/>
</dbReference>
<dbReference type="InterPro" id="IPR013185">
    <property type="entry name" value="Transl_elong_KOW-like"/>
</dbReference>
<dbReference type="InterPro" id="IPR001059">
    <property type="entry name" value="Transl_elong_P/YeiP_cen"/>
</dbReference>
<dbReference type="InterPro" id="IPR013852">
    <property type="entry name" value="Transl_elong_P/YeiP_CS"/>
</dbReference>
<dbReference type="InterPro" id="IPR011768">
    <property type="entry name" value="Transl_elongation_fac_P"/>
</dbReference>
<dbReference type="InterPro" id="IPR008991">
    <property type="entry name" value="Translation_prot_SH3-like_sf"/>
</dbReference>
<dbReference type="NCBIfam" id="TIGR00038">
    <property type="entry name" value="efp"/>
    <property type="match status" value="1"/>
</dbReference>
<dbReference type="NCBIfam" id="NF001810">
    <property type="entry name" value="PRK00529.1"/>
    <property type="match status" value="1"/>
</dbReference>
<dbReference type="PANTHER" id="PTHR30053">
    <property type="entry name" value="ELONGATION FACTOR P"/>
    <property type="match status" value="1"/>
</dbReference>
<dbReference type="PANTHER" id="PTHR30053:SF12">
    <property type="entry name" value="ELONGATION FACTOR P (EF-P) FAMILY PROTEIN"/>
    <property type="match status" value="1"/>
</dbReference>
<dbReference type="Pfam" id="PF01132">
    <property type="entry name" value="EFP"/>
    <property type="match status" value="1"/>
</dbReference>
<dbReference type="Pfam" id="PF08207">
    <property type="entry name" value="EFP_N"/>
    <property type="match status" value="1"/>
</dbReference>
<dbReference type="Pfam" id="PF09285">
    <property type="entry name" value="Elong-fact-P_C"/>
    <property type="match status" value="1"/>
</dbReference>
<dbReference type="PIRSF" id="PIRSF005901">
    <property type="entry name" value="EF-P"/>
    <property type="match status" value="1"/>
</dbReference>
<dbReference type="SMART" id="SM01185">
    <property type="entry name" value="EFP"/>
    <property type="match status" value="1"/>
</dbReference>
<dbReference type="SMART" id="SM00841">
    <property type="entry name" value="Elong-fact-P_C"/>
    <property type="match status" value="1"/>
</dbReference>
<dbReference type="SUPFAM" id="SSF50249">
    <property type="entry name" value="Nucleic acid-binding proteins"/>
    <property type="match status" value="2"/>
</dbReference>
<dbReference type="SUPFAM" id="SSF50104">
    <property type="entry name" value="Translation proteins SH3-like domain"/>
    <property type="match status" value="1"/>
</dbReference>
<dbReference type="PROSITE" id="PS01275">
    <property type="entry name" value="EFP"/>
    <property type="match status" value="1"/>
</dbReference>